<protein>
    <recommendedName>
        <fullName evidence="1">UvrABC system protein C</fullName>
        <shortName evidence="1">Protein UvrC</shortName>
    </recommendedName>
    <alternativeName>
        <fullName evidence="1">Excinuclease ABC subunit C</fullName>
    </alternativeName>
</protein>
<name>UVRC_RHORT</name>
<evidence type="ECO:0000255" key="1">
    <source>
        <dbReference type="HAMAP-Rule" id="MF_00203"/>
    </source>
</evidence>
<evidence type="ECO:0000256" key="2">
    <source>
        <dbReference type="SAM" id="MobiDB-lite"/>
    </source>
</evidence>
<dbReference type="EMBL" id="CP000230">
    <property type="protein sequence ID" value="ABC23020.1"/>
    <property type="molecule type" value="Genomic_DNA"/>
</dbReference>
<dbReference type="RefSeq" id="WP_011389875.1">
    <property type="nucleotide sequence ID" value="NC_007643.1"/>
</dbReference>
<dbReference type="RefSeq" id="YP_427307.1">
    <property type="nucleotide sequence ID" value="NC_007643.1"/>
</dbReference>
<dbReference type="SMR" id="Q2RS75"/>
<dbReference type="STRING" id="269796.Rru_A2220"/>
<dbReference type="EnsemblBacteria" id="ABC23020">
    <property type="protein sequence ID" value="ABC23020"/>
    <property type="gene ID" value="Rru_A2220"/>
</dbReference>
<dbReference type="KEGG" id="rru:Rru_A2220"/>
<dbReference type="PATRIC" id="fig|269796.9.peg.2317"/>
<dbReference type="eggNOG" id="COG0322">
    <property type="taxonomic scope" value="Bacteria"/>
</dbReference>
<dbReference type="HOGENOM" id="CLU_014841_3_0_5"/>
<dbReference type="PhylomeDB" id="Q2RS75"/>
<dbReference type="Proteomes" id="UP000001929">
    <property type="component" value="Chromosome"/>
</dbReference>
<dbReference type="GO" id="GO:0005737">
    <property type="term" value="C:cytoplasm"/>
    <property type="evidence" value="ECO:0007669"/>
    <property type="project" value="UniProtKB-SubCell"/>
</dbReference>
<dbReference type="GO" id="GO:0009380">
    <property type="term" value="C:excinuclease repair complex"/>
    <property type="evidence" value="ECO:0007669"/>
    <property type="project" value="InterPro"/>
</dbReference>
<dbReference type="GO" id="GO:0003677">
    <property type="term" value="F:DNA binding"/>
    <property type="evidence" value="ECO:0007669"/>
    <property type="project" value="UniProtKB-UniRule"/>
</dbReference>
<dbReference type="GO" id="GO:0009381">
    <property type="term" value="F:excinuclease ABC activity"/>
    <property type="evidence" value="ECO:0007669"/>
    <property type="project" value="UniProtKB-UniRule"/>
</dbReference>
<dbReference type="GO" id="GO:0006289">
    <property type="term" value="P:nucleotide-excision repair"/>
    <property type="evidence" value="ECO:0007669"/>
    <property type="project" value="UniProtKB-UniRule"/>
</dbReference>
<dbReference type="GO" id="GO:0009432">
    <property type="term" value="P:SOS response"/>
    <property type="evidence" value="ECO:0007669"/>
    <property type="project" value="UniProtKB-UniRule"/>
</dbReference>
<dbReference type="CDD" id="cd10434">
    <property type="entry name" value="GIY-YIG_UvrC_Cho"/>
    <property type="match status" value="1"/>
</dbReference>
<dbReference type="FunFam" id="3.30.420.340:FF:000001">
    <property type="entry name" value="UvrABC system protein C"/>
    <property type="match status" value="1"/>
</dbReference>
<dbReference type="FunFam" id="3.40.1440.10:FF:000001">
    <property type="entry name" value="UvrABC system protein C"/>
    <property type="match status" value="1"/>
</dbReference>
<dbReference type="Gene3D" id="1.10.150.20">
    <property type="entry name" value="5' to 3' exonuclease, C-terminal subdomain"/>
    <property type="match status" value="1"/>
</dbReference>
<dbReference type="Gene3D" id="3.40.1440.10">
    <property type="entry name" value="GIY-YIG endonuclease"/>
    <property type="match status" value="1"/>
</dbReference>
<dbReference type="Gene3D" id="4.10.860.10">
    <property type="entry name" value="UVR domain"/>
    <property type="match status" value="1"/>
</dbReference>
<dbReference type="Gene3D" id="3.30.420.340">
    <property type="entry name" value="UvrC, RNAse H endonuclease domain"/>
    <property type="match status" value="1"/>
</dbReference>
<dbReference type="HAMAP" id="MF_00203">
    <property type="entry name" value="UvrC"/>
    <property type="match status" value="1"/>
</dbReference>
<dbReference type="InterPro" id="IPR000305">
    <property type="entry name" value="GIY-YIG_endonuc"/>
</dbReference>
<dbReference type="InterPro" id="IPR035901">
    <property type="entry name" value="GIY-YIG_endonuc_sf"/>
</dbReference>
<dbReference type="InterPro" id="IPR047296">
    <property type="entry name" value="GIY-YIG_UvrC_Cho"/>
</dbReference>
<dbReference type="InterPro" id="IPR003583">
    <property type="entry name" value="Hlx-hairpin-Hlx_DNA-bd_motif"/>
</dbReference>
<dbReference type="InterPro" id="IPR010994">
    <property type="entry name" value="RuvA_2-like"/>
</dbReference>
<dbReference type="InterPro" id="IPR001943">
    <property type="entry name" value="UVR_dom"/>
</dbReference>
<dbReference type="InterPro" id="IPR036876">
    <property type="entry name" value="UVR_dom_sf"/>
</dbReference>
<dbReference type="InterPro" id="IPR050066">
    <property type="entry name" value="UvrABC_protein_C"/>
</dbReference>
<dbReference type="InterPro" id="IPR004791">
    <property type="entry name" value="UvrC"/>
</dbReference>
<dbReference type="InterPro" id="IPR001162">
    <property type="entry name" value="UvrC_RNase_H_dom"/>
</dbReference>
<dbReference type="InterPro" id="IPR038476">
    <property type="entry name" value="UvrC_RNase_H_dom_sf"/>
</dbReference>
<dbReference type="NCBIfam" id="NF001824">
    <property type="entry name" value="PRK00558.1-5"/>
    <property type="match status" value="1"/>
</dbReference>
<dbReference type="NCBIfam" id="TIGR00194">
    <property type="entry name" value="uvrC"/>
    <property type="match status" value="1"/>
</dbReference>
<dbReference type="PANTHER" id="PTHR30562:SF1">
    <property type="entry name" value="UVRABC SYSTEM PROTEIN C"/>
    <property type="match status" value="1"/>
</dbReference>
<dbReference type="PANTHER" id="PTHR30562">
    <property type="entry name" value="UVRC/OXIDOREDUCTASE"/>
    <property type="match status" value="1"/>
</dbReference>
<dbReference type="Pfam" id="PF01541">
    <property type="entry name" value="GIY-YIG"/>
    <property type="match status" value="1"/>
</dbReference>
<dbReference type="Pfam" id="PF14520">
    <property type="entry name" value="HHH_5"/>
    <property type="match status" value="1"/>
</dbReference>
<dbReference type="Pfam" id="PF02151">
    <property type="entry name" value="UVR"/>
    <property type="match status" value="1"/>
</dbReference>
<dbReference type="Pfam" id="PF22920">
    <property type="entry name" value="UvrC_RNaseH"/>
    <property type="match status" value="1"/>
</dbReference>
<dbReference type="Pfam" id="PF08459">
    <property type="entry name" value="UvrC_RNaseH_dom"/>
    <property type="match status" value="1"/>
</dbReference>
<dbReference type="SMART" id="SM00465">
    <property type="entry name" value="GIYc"/>
    <property type="match status" value="1"/>
</dbReference>
<dbReference type="SMART" id="SM00278">
    <property type="entry name" value="HhH1"/>
    <property type="match status" value="2"/>
</dbReference>
<dbReference type="SUPFAM" id="SSF46600">
    <property type="entry name" value="C-terminal UvrC-binding domain of UvrB"/>
    <property type="match status" value="1"/>
</dbReference>
<dbReference type="SUPFAM" id="SSF82771">
    <property type="entry name" value="GIY-YIG endonuclease"/>
    <property type="match status" value="1"/>
</dbReference>
<dbReference type="SUPFAM" id="SSF47781">
    <property type="entry name" value="RuvA domain 2-like"/>
    <property type="match status" value="1"/>
</dbReference>
<dbReference type="PROSITE" id="PS50164">
    <property type="entry name" value="GIY_YIG"/>
    <property type="match status" value="1"/>
</dbReference>
<dbReference type="PROSITE" id="PS50151">
    <property type="entry name" value="UVR"/>
    <property type="match status" value="1"/>
</dbReference>
<dbReference type="PROSITE" id="PS50165">
    <property type="entry name" value="UVRC"/>
    <property type="match status" value="1"/>
</dbReference>
<keyword id="KW-0963">Cytoplasm</keyword>
<keyword id="KW-0227">DNA damage</keyword>
<keyword id="KW-0228">DNA excision</keyword>
<keyword id="KW-0234">DNA repair</keyword>
<keyword id="KW-0267">Excision nuclease</keyword>
<keyword id="KW-1185">Reference proteome</keyword>
<keyword id="KW-0742">SOS response</keyword>
<reference key="1">
    <citation type="journal article" date="2011" name="Stand. Genomic Sci.">
        <title>Complete genome sequence of Rhodospirillum rubrum type strain (S1).</title>
        <authorList>
            <person name="Munk A.C."/>
            <person name="Copeland A."/>
            <person name="Lucas S."/>
            <person name="Lapidus A."/>
            <person name="Del Rio T.G."/>
            <person name="Barry K."/>
            <person name="Detter J.C."/>
            <person name="Hammon N."/>
            <person name="Israni S."/>
            <person name="Pitluck S."/>
            <person name="Brettin T."/>
            <person name="Bruce D."/>
            <person name="Han C."/>
            <person name="Tapia R."/>
            <person name="Gilna P."/>
            <person name="Schmutz J."/>
            <person name="Larimer F."/>
            <person name="Land M."/>
            <person name="Kyrpides N.C."/>
            <person name="Mavromatis K."/>
            <person name="Richardson P."/>
            <person name="Rohde M."/>
            <person name="Goeker M."/>
            <person name="Klenk H.P."/>
            <person name="Zhang Y."/>
            <person name="Roberts G.P."/>
            <person name="Reslewic S."/>
            <person name="Schwartz D.C."/>
        </authorList>
    </citation>
    <scope>NUCLEOTIDE SEQUENCE [LARGE SCALE GENOMIC DNA]</scope>
    <source>
        <strain>ATCC 11170 / ATH 1.1.1 / DSM 467 / LMG 4362 / NCIMB 8255 / S1</strain>
    </source>
</reference>
<feature type="chain" id="PRO_0000264940" description="UvrABC system protein C">
    <location>
        <begin position="1"/>
        <end position="639"/>
    </location>
</feature>
<feature type="domain" description="GIY-YIG" evidence="1">
    <location>
        <begin position="42"/>
        <end position="120"/>
    </location>
</feature>
<feature type="domain" description="UVR" evidence="1">
    <location>
        <begin position="230"/>
        <end position="265"/>
    </location>
</feature>
<feature type="region of interest" description="Disordered" evidence="2">
    <location>
        <begin position="1"/>
        <end position="28"/>
    </location>
</feature>
<feature type="compositionally biased region" description="Acidic residues" evidence="2">
    <location>
        <begin position="1"/>
        <end position="16"/>
    </location>
</feature>
<feature type="compositionally biased region" description="Low complexity" evidence="2">
    <location>
        <begin position="17"/>
        <end position="27"/>
    </location>
</feature>
<comment type="function">
    <text evidence="1">The UvrABC repair system catalyzes the recognition and processing of DNA lesions. UvrC both incises the 5' and 3' sides of the lesion. The N-terminal half is responsible for the 3' incision and the C-terminal half is responsible for the 5' incision.</text>
</comment>
<comment type="subunit">
    <text evidence="1">Interacts with UvrB in an incision complex.</text>
</comment>
<comment type="subcellular location">
    <subcellularLocation>
        <location evidence="1">Cytoplasm</location>
    </subcellularLocation>
</comment>
<comment type="similarity">
    <text evidence="1">Belongs to the UvrC family.</text>
</comment>
<gene>
    <name evidence="1" type="primary">uvrC</name>
    <name type="ordered locus">Rru_A2220</name>
</gene>
<organism>
    <name type="scientific">Rhodospirillum rubrum (strain ATCC 11170 / ATH 1.1.1 / DSM 467 / LMG 4362 / NCIMB 8255 / S1)</name>
    <dbReference type="NCBI Taxonomy" id="269796"/>
    <lineage>
        <taxon>Bacteria</taxon>
        <taxon>Pseudomonadati</taxon>
        <taxon>Pseudomonadota</taxon>
        <taxon>Alphaproteobacteria</taxon>
        <taxon>Rhodospirillales</taxon>
        <taxon>Rhodospirillaceae</taxon>
        <taxon>Rhodospirillum</taxon>
    </lineage>
</organism>
<accession>Q2RS75</accession>
<proteinExistence type="inferred from homology"/>
<sequence>MTDLPVDEPDRDDGADQPDAGADPATPRGVEAIRAALRTMPSSPGVYRMIDGKGDVLYVGKARNLKRRVINYTQPHRLPVRIQRMIAATLTMEVLTTHTEAEALLLESNLIKKLKPRYNILLRDDKSFPYIEITSDHAFPRIVKFRGTLRKGGEYFGPFASAGAVTSTLTALQKTFLLRTCADNVFASRSRPCLLFQIKRCAAPCVDRVAEADYKALVEEARAFLSGSSKALQHDLAKRMDEAAQALDYEQAAIFRDRIKALTNVQSHQDINLPTLGEADVIACHQAGGQTCVQVFFFRGGRNNGNRSFFPAHAGDEGLPEVLEAFLGQFYAGFPPPREILLLTDIPHHDLVEQALCLRAGHRVRLVVPRRGSRRKLIDHALANAREALGRRLAESSAQRTLLEGTAVAFGLDGPLQRVEIYDNSHISGTHAVGGMVVAGPEGFMKAAYRKFNIRSPDITPGDDYAMMREVMIRRFARARKEDPDRDRGQWPDLVLIDGGLGQLNAVREALAEIGVEDVPLVGVAKGPDRDAGRERFFVPGRPPFMLRHNDPVLYFIQRLRDEAHRFAIGSHRTRRSKAIGVSPLDSVPGIGASRKKALLHHFGSAKAVSQAGLTDLEAVEGISAALAKKLYDHFHSEG</sequence>